<accession>Q32AA5</accession>
<keyword id="KW-0021">Allosteric enzyme</keyword>
<keyword id="KW-0963">Cytoplasm</keyword>
<keyword id="KW-0378">Hydrolase</keyword>
<keyword id="KW-0479">Metal-binding</keyword>
<keyword id="KW-0645">Protease</keyword>
<keyword id="KW-1185">Reference proteome</keyword>
<keyword id="KW-0915">Sodium</keyword>
<keyword id="KW-0346">Stress response</keyword>
<keyword id="KW-0888">Threonine protease</keyword>
<sequence>MTTIVSVRRNGHVVIAGDGQATLGNTVMKGNVKKVRRLYNDKVIAGFAGGTADAFTLFELFERKLEMHQGHLVKAAVELAKDWRTDRMLRKLEALLAVADETASLIITGNGDVVQPENDLIAIGSGGPYAQAAARALLENTELSAREIAEKALDIAGDICIYTNHFHTIEELSYKA</sequence>
<gene>
    <name evidence="1" type="primary">hslV</name>
    <name type="ordered locus">SDY_3805</name>
</gene>
<dbReference type="EC" id="3.4.25.2" evidence="1"/>
<dbReference type="EMBL" id="CP000034">
    <property type="protein sequence ID" value="ABB63750.1"/>
    <property type="molecule type" value="Genomic_DNA"/>
</dbReference>
<dbReference type="RefSeq" id="WP_000208242.1">
    <property type="nucleotide sequence ID" value="NC_007606.1"/>
</dbReference>
<dbReference type="RefSeq" id="YP_405241.1">
    <property type="nucleotide sequence ID" value="NC_007606.1"/>
</dbReference>
<dbReference type="SMR" id="Q32AA5"/>
<dbReference type="STRING" id="300267.SDY_3805"/>
<dbReference type="MEROPS" id="T01.006"/>
<dbReference type="EnsemblBacteria" id="ABB63750">
    <property type="protein sequence ID" value="ABB63750"/>
    <property type="gene ID" value="SDY_3805"/>
</dbReference>
<dbReference type="GeneID" id="93777966"/>
<dbReference type="KEGG" id="sdy:SDY_3805"/>
<dbReference type="PATRIC" id="fig|300267.13.peg.4495"/>
<dbReference type="HOGENOM" id="CLU_093872_1_0_6"/>
<dbReference type="Proteomes" id="UP000002716">
    <property type="component" value="Chromosome"/>
</dbReference>
<dbReference type="GO" id="GO:0009376">
    <property type="term" value="C:HslUV protease complex"/>
    <property type="evidence" value="ECO:0007669"/>
    <property type="project" value="UniProtKB-UniRule"/>
</dbReference>
<dbReference type="GO" id="GO:0005839">
    <property type="term" value="C:proteasome core complex"/>
    <property type="evidence" value="ECO:0007669"/>
    <property type="project" value="InterPro"/>
</dbReference>
<dbReference type="GO" id="GO:0046872">
    <property type="term" value="F:metal ion binding"/>
    <property type="evidence" value="ECO:0007669"/>
    <property type="project" value="UniProtKB-KW"/>
</dbReference>
<dbReference type="GO" id="GO:0004298">
    <property type="term" value="F:threonine-type endopeptidase activity"/>
    <property type="evidence" value="ECO:0007669"/>
    <property type="project" value="UniProtKB-KW"/>
</dbReference>
<dbReference type="GO" id="GO:0051603">
    <property type="term" value="P:proteolysis involved in protein catabolic process"/>
    <property type="evidence" value="ECO:0007669"/>
    <property type="project" value="InterPro"/>
</dbReference>
<dbReference type="CDD" id="cd01913">
    <property type="entry name" value="protease_HslV"/>
    <property type="match status" value="1"/>
</dbReference>
<dbReference type="FunFam" id="3.60.20.10:FF:000002">
    <property type="entry name" value="ATP-dependent protease subunit HslV"/>
    <property type="match status" value="1"/>
</dbReference>
<dbReference type="Gene3D" id="3.60.20.10">
    <property type="entry name" value="Glutamine Phosphoribosylpyrophosphate, subunit 1, domain 1"/>
    <property type="match status" value="1"/>
</dbReference>
<dbReference type="HAMAP" id="MF_00248">
    <property type="entry name" value="HslV"/>
    <property type="match status" value="1"/>
</dbReference>
<dbReference type="InterPro" id="IPR022281">
    <property type="entry name" value="ATP-dep_Prtase_HsIV_su"/>
</dbReference>
<dbReference type="InterPro" id="IPR029055">
    <property type="entry name" value="Ntn_hydrolases_N"/>
</dbReference>
<dbReference type="InterPro" id="IPR001353">
    <property type="entry name" value="Proteasome_sua/b"/>
</dbReference>
<dbReference type="InterPro" id="IPR023333">
    <property type="entry name" value="Proteasome_suB-type"/>
</dbReference>
<dbReference type="NCBIfam" id="TIGR03692">
    <property type="entry name" value="ATP_dep_HslV"/>
    <property type="match status" value="1"/>
</dbReference>
<dbReference type="NCBIfam" id="NF003964">
    <property type="entry name" value="PRK05456.1"/>
    <property type="match status" value="1"/>
</dbReference>
<dbReference type="PANTHER" id="PTHR32194:SF0">
    <property type="entry name" value="ATP-DEPENDENT PROTEASE SUBUNIT HSLV"/>
    <property type="match status" value="1"/>
</dbReference>
<dbReference type="PANTHER" id="PTHR32194">
    <property type="entry name" value="METALLOPROTEASE TLDD"/>
    <property type="match status" value="1"/>
</dbReference>
<dbReference type="Pfam" id="PF00227">
    <property type="entry name" value="Proteasome"/>
    <property type="match status" value="1"/>
</dbReference>
<dbReference type="PIRSF" id="PIRSF039093">
    <property type="entry name" value="HslV"/>
    <property type="match status" value="1"/>
</dbReference>
<dbReference type="SUPFAM" id="SSF56235">
    <property type="entry name" value="N-terminal nucleophile aminohydrolases (Ntn hydrolases)"/>
    <property type="match status" value="1"/>
</dbReference>
<dbReference type="PROSITE" id="PS51476">
    <property type="entry name" value="PROTEASOME_BETA_2"/>
    <property type="match status" value="1"/>
</dbReference>
<proteinExistence type="inferred from homology"/>
<organism>
    <name type="scientific">Shigella dysenteriae serotype 1 (strain Sd197)</name>
    <dbReference type="NCBI Taxonomy" id="300267"/>
    <lineage>
        <taxon>Bacteria</taxon>
        <taxon>Pseudomonadati</taxon>
        <taxon>Pseudomonadota</taxon>
        <taxon>Gammaproteobacteria</taxon>
        <taxon>Enterobacterales</taxon>
        <taxon>Enterobacteriaceae</taxon>
        <taxon>Shigella</taxon>
    </lineage>
</organism>
<comment type="function">
    <text evidence="1">Protease subunit of a proteasome-like degradation complex believed to be a general protein degrading machinery.</text>
</comment>
<comment type="catalytic activity">
    <reaction evidence="1">
        <text>ATP-dependent cleavage of peptide bonds with broad specificity.</text>
        <dbReference type="EC" id="3.4.25.2"/>
    </reaction>
</comment>
<comment type="activity regulation">
    <text evidence="1">Allosterically activated by HslU binding.</text>
</comment>
<comment type="subunit">
    <text evidence="1">A double ring-shaped homohexamer of HslV is capped on each side by a ring-shaped HslU homohexamer. The assembly of the HslU/HslV complex is dependent on binding of ATP.</text>
</comment>
<comment type="subcellular location">
    <subcellularLocation>
        <location evidence="1">Cytoplasm</location>
    </subcellularLocation>
</comment>
<comment type="induction">
    <text evidence="1">By heat shock.</text>
</comment>
<comment type="similarity">
    <text evidence="1">Belongs to the peptidase T1B family. HslV subfamily.</text>
</comment>
<protein>
    <recommendedName>
        <fullName evidence="1">ATP-dependent protease subunit HslV</fullName>
        <ecNumber evidence="1">3.4.25.2</ecNumber>
    </recommendedName>
    <alternativeName>
        <fullName evidence="1">Heat shock protein HslV</fullName>
    </alternativeName>
</protein>
<name>HSLV_SHIDS</name>
<feature type="chain" id="PRO_1000012675" description="ATP-dependent protease subunit HslV">
    <location>
        <begin position="1"/>
        <end position="176"/>
    </location>
</feature>
<feature type="active site" evidence="1">
    <location>
        <position position="2"/>
    </location>
</feature>
<feature type="binding site" evidence="1">
    <location>
        <position position="157"/>
    </location>
    <ligand>
        <name>Na(+)</name>
        <dbReference type="ChEBI" id="CHEBI:29101"/>
    </ligand>
</feature>
<feature type="binding site" evidence="1">
    <location>
        <position position="160"/>
    </location>
    <ligand>
        <name>Na(+)</name>
        <dbReference type="ChEBI" id="CHEBI:29101"/>
    </ligand>
</feature>
<feature type="binding site" evidence="1">
    <location>
        <position position="163"/>
    </location>
    <ligand>
        <name>Na(+)</name>
        <dbReference type="ChEBI" id="CHEBI:29101"/>
    </ligand>
</feature>
<reference key="1">
    <citation type="journal article" date="2005" name="Nucleic Acids Res.">
        <title>Genome dynamics and diversity of Shigella species, the etiologic agents of bacillary dysentery.</title>
        <authorList>
            <person name="Yang F."/>
            <person name="Yang J."/>
            <person name="Zhang X."/>
            <person name="Chen L."/>
            <person name="Jiang Y."/>
            <person name="Yan Y."/>
            <person name="Tang X."/>
            <person name="Wang J."/>
            <person name="Xiong Z."/>
            <person name="Dong J."/>
            <person name="Xue Y."/>
            <person name="Zhu Y."/>
            <person name="Xu X."/>
            <person name="Sun L."/>
            <person name="Chen S."/>
            <person name="Nie H."/>
            <person name="Peng J."/>
            <person name="Xu J."/>
            <person name="Wang Y."/>
            <person name="Yuan Z."/>
            <person name="Wen Y."/>
            <person name="Yao Z."/>
            <person name="Shen Y."/>
            <person name="Qiang B."/>
            <person name="Hou Y."/>
            <person name="Yu J."/>
            <person name="Jin Q."/>
        </authorList>
    </citation>
    <scope>NUCLEOTIDE SEQUENCE [LARGE SCALE GENOMIC DNA]</scope>
    <source>
        <strain>Sd197</strain>
    </source>
</reference>
<evidence type="ECO:0000255" key="1">
    <source>
        <dbReference type="HAMAP-Rule" id="MF_00248"/>
    </source>
</evidence>